<name>1433Z_BOVIN</name>
<comment type="function">
    <text evidence="1 4 7">Adapter protein implicated in the regulation of a large spectrum of both general and specialized signaling pathways (PubMed:7931346). Binds to a large number of partners, usually by recognition of a phosphoserine or phosphothreonine motif (PubMed:7931346). Binding generally results in the modulation of the activity of the binding partner (PubMed:7931346). Promotes cytosolic retention and inactivation of TFEB transcription factor by binding to phosphorylated TFEB. Induces ARHGEF7 activity on RAC1 as well as lamellipodia and membrane ruffle formation (By similarity). In neurons, regulates spine maturation through the modulation of ARHGEF7 activity (By similarity).</text>
</comment>
<comment type="subunit">
    <text evidence="2 4 5 6 8">Homodimer. Heterodimerizes with YWHAE (By similarity). Homo- and heterodimerization is inhibited by phosphorylation on Ser-58 (By similarity). Interacts with FOXO4, NOXA1, SSH1 ARHGEF2, CDK16 and BSPRY. Interacts with WEE1 (C-terminal). Interacts with MLF1 (phosphorylated form); the interaction retains it in the cytoplasm. Interacts with BAX; the interaction occurs in the cytoplasm. Under stress conditions, MAPK8-mediated phosphorylation releases BAX to mitochondria. Interacts with TP53; the interaction enhances p53 transcriptional activity. The Ser-58 phosphorylated form inhibits this interaction and p53 transcriptional activity. Interacts with ABL1 (phosphorylated form); the interaction retains ABL1 in the cytoplasm. Interacts with PKA-phosphorylated AANAT; the interaction modulates AANAT enzymatic activity by increasing affinity for arylalkylamines and acetyl-CoA and protecting the enzyme from dephosphorylation and proteasomal degradation. It may also prevent thiol-dependent inactivation (By similarity). Interacts with AKT1; the interaction phosphorylates YWHAZ and modulates dimerization (By similarity). Interacts with GAB2. Interacts with BCL2L11, SAMSN1 and TLK2 (By similarity). Interacts with phosphorylated RAF1; the interaction is inhibited when YWHAZ is phosphorylated on Thr-232. Interacts with Thr-phosphorylated ITGB2. Interacts with the 'Thr-369' phosphorylated form of DAPK2 (By similarity). Interacts with PI4KB, TBC1D22A and TBC1D22B (By similarity). Interacts with ZFP36L1 (via phosphorylated form); this interaction occurs in a p38 MAPK- and AKT-signaling pathways (By similarity). Interacts with SLITRK1 (By similarity). Interacts with AK5, LDB1, MADD, MARK3, PDE1A and SMARCB1 (By similarity). Interacts with YWHAZ (By similarity). Interacts with MEFV (By similarity). Interacts with ADAM22 (via C-terminus) (By similarity).</text>
</comment>
<comment type="subcellular location">
    <subcellularLocation>
        <location evidence="4">Cytoplasm</location>
    </subcellularLocation>
    <subcellularLocation>
        <location evidence="4">Melanosome</location>
    </subcellularLocation>
    <text evidence="4">Located to stage I to stage IV melanosomes.</text>
</comment>
<comment type="PTM">
    <text evidence="4">The delta, brain-specific form differs from the zeta form in being phosphorylated. Phosphorylation on Ser-184 by MAPK8; promotes dissociation of BAX and translocation of BAX to mitochondria. Phosphorylation on Thr-232; inhibits binding of RAF1. Phosphorylated on Ser-58 by PKA and protein kinase C delta type catalytic subunit in a sphingosine-dependent fashion. Phosphorylation on Ser-58 by PKA; disrupts homodimerization and heterodimerization with YHAE and TP53.</text>
</comment>
<comment type="similarity">
    <text evidence="9">Belongs to the 14-3-3 family.</text>
</comment>
<proteinExistence type="evidence at protein level"/>
<protein>
    <recommendedName>
        <fullName>14-3-3 protein zeta/delta</fullName>
    </recommendedName>
    <alternativeName>
        <fullName>Factor activating exoenzyme S</fullName>
        <shortName>FAS</shortName>
    </alternativeName>
    <alternativeName>
        <fullName>Protein kinase C inhibitor protein 1</fullName>
        <shortName>KCIP-1</shortName>
    </alternativeName>
</protein>
<sequence length="245" mass="27745">MDKNELVQKAKLAEQAERYDDMAACMKSVTEQGAELSNEERNLLSVAYKNVVGARRSSWRVVSSIEQKTEGAEKKQQMAREYREKIETELRDICNDVLSLLEKFLIPNASQAESKVFYLKMKGDYYRYLAEVAAGDDKKGIVDQSQQAYQEAFEISKKEMQPTHPIRLGLALNFSVFYYEILNSPEKACSLAKTAFDEAIAELDTLSEESYKDSTLIMQLLRDNLTLWTSDTQGDEAEAGEGGEN</sequence>
<reference key="1">
    <citation type="journal article" date="1992" name="FEBS Lett.">
        <title>Activation of protein kinase C by the 14-3-3 proteins homologous with Exo1 protein that stimulates calcium-dependent exocytosis.</title>
        <authorList>
            <person name="Isobe T."/>
            <person name="Hiyane Y."/>
            <person name="Ichimura T."/>
            <person name="Okuyama T."/>
            <person name="Takahashi N."/>
            <person name="Nakajo S."/>
            <person name="Nakaya K."/>
        </authorList>
    </citation>
    <scope>PROTEIN SEQUENCE</scope>
    <source>
        <tissue>Brain</tissue>
    </source>
</reference>
<reference key="2">
    <citation type="journal article" date="1993" name="Proc. Natl. Acad. Sci. U.S.A.">
        <title>The eukaryotic host factor that activates exoenzyme S of Pseudomonas aeruginosa is a member of the 14-3-3 protein family.</title>
        <authorList>
            <person name="Fu H."/>
            <person name="Coburn J."/>
            <person name="Collier R.J."/>
        </authorList>
    </citation>
    <scope>NUCLEOTIDE SEQUENCE [MRNA]</scope>
    <scope>PROTEIN SEQUENCE OF 104-115; 140-157 AND 194-212</scope>
    <source>
        <tissue>Brain</tissue>
    </source>
</reference>
<reference key="3">
    <citation type="submission" date="2005-08" db="EMBL/GenBank/DDBJ databases">
        <authorList>
            <consortium name="NIH - Mammalian Gene Collection (MGC) project"/>
        </authorList>
    </citation>
    <scope>NUCLEOTIDE SEQUENCE [LARGE SCALE MRNA]</scope>
    <source>
        <strain>Crossbred X Angus</strain>
        <tissue>Ileum</tissue>
    </source>
</reference>
<reference key="4">
    <citation type="journal article" date="1994" name="J. Neurochem.">
        <title>Activation of protein kinase C by purified bovine brain 14-3-3: comparison with tyrosine hydroxylase activation.</title>
        <authorList>
            <person name="Tanji M."/>
            <person name="Horwitz R."/>
            <person name="Rosenfeld G."/>
            <person name="Waymire J.C."/>
        </authorList>
    </citation>
    <scope>FUNCTION</scope>
</reference>
<reference key="5">
    <citation type="journal article" date="1995" name="Nature">
        <title>Crystal structure of the zeta isoform of the 14-3-3 protein.</title>
        <authorList>
            <person name="Liu D."/>
            <person name="Blenkowska J."/>
            <person name="Petosa C."/>
            <person name="Collier R.J."/>
            <person name="Fu H."/>
            <person name="Liddington R."/>
        </authorList>
    </citation>
    <scope>X-RAY CRYSTALLOGRAPHY (2.8 ANGSTROMS)</scope>
</reference>
<reference key="6">
    <citation type="journal article" date="1998" name="J. Biol. Chem.">
        <title>14-3-3zeta binds a phosphorylated Raf peptide and an unphosphorylated peptide via its conserved amphipathic groove.</title>
        <authorList>
            <person name="Petosa C."/>
            <person name="Masters S.C."/>
            <person name="Bankston L.A."/>
            <person name="Pohl J."/>
            <person name="Wang B."/>
            <person name="Fu H."/>
            <person name="Liddington R.C."/>
        </authorList>
    </citation>
    <scope>X-RAY CRYSTALLOGRAPHY (3.35 ANGSTROMS) IN COMPLEX WITH PHOSPHORYLATED RAF1</scope>
    <scope>INTERACTION WITH PHOSPHOSERINE PEPTIDE</scope>
    <scope>SUBUNIT</scope>
</reference>
<reference key="7">
    <citation type="journal article" date="2008" name="Blood">
        <title>Beta2 integrin phosphorylation on Thr758 acts as a molecular switch to regulate 14-3-3 and filamin binding.</title>
        <authorList>
            <person name="Takala H."/>
            <person name="Nurminen E."/>
            <person name="Nurmi S.M."/>
            <person name="Aatonen M."/>
            <person name="Strandin T."/>
            <person name="Takatalo M."/>
            <person name="Kiema T."/>
            <person name="Gahmberg C.G."/>
            <person name="Ylaenne J."/>
            <person name="Fagerholm S.C."/>
        </authorList>
    </citation>
    <scope>X-RAY CRYSTALLOGRAPHY (2.5 ANGSTROMS) IN COMPLEX WITH PHOSPHORYLATED ITGB2</scope>
    <scope>INTERACTION WITH PHOSPHORYLATED ITGB2</scope>
</reference>
<organism>
    <name type="scientific">Bos taurus</name>
    <name type="common">Bovine</name>
    <dbReference type="NCBI Taxonomy" id="9913"/>
    <lineage>
        <taxon>Eukaryota</taxon>
        <taxon>Metazoa</taxon>
        <taxon>Chordata</taxon>
        <taxon>Craniata</taxon>
        <taxon>Vertebrata</taxon>
        <taxon>Euteleostomi</taxon>
        <taxon>Mammalia</taxon>
        <taxon>Eutheria</taxon>
        <taxon>Laurasiatheria</taxon>
        <taxon>Artiodactyla</taxon>
        <taxon>Ruminantia</taxon>
        <taxon>Pecora</taxon>
        <taxon>Bovidae</taxon>
        <taxon>Bovinae</taxon>
        <taxon>Bos</taxon>
    </lineage>
</organism>
<gene>
    <name type="primary">YWHAZ</name>
</gene>
<evidence type="ECO:0000250" key="1">
    <source>
        <dbReference type="UniProtKB" id="O55043"/>
    </source>
</evidence>
<evidence type="ECO:0000250" key="2">
    <source>
        <dbReference type="UniProtKB" id="P63101"/>
    </source>
</evidence>
<evidence type="ECO:0000250" key="3">
    <source>
        <dbReference type="UniProtKB" id="P63102"/>
    </source>
</evidence>
<evidence type="ECO:0000250" key="4">
    <source>
        <dbReference type="UniProtKB" id="P63104"/>
    </source>
</evidence>
<evidence type="ECO:0000250" key="5">
    <source>
        <dbReference type="UniProtKB" id="Q9ES28"/>
    </source>
</evidence>
<evidence type="ECO:0000269" key="6">
    <source>
    </source>
</evidence>
<evidence type="ECO:0000269" key="7">
    <source>
    </source>
</evidence>
<evidence type="ECO:0000269" key="8">
    <source>
    </source>
</evidence>
<evidence type="ECO:0000305" key="9"/>
<evidence type="ECO:0007829" key="10">
    <source>
        <dbReference type="PDB" id="1A38"/>
    </source>
</evidence>
<evidence type="ECO:0007829" key="11">
    <source>
        <dbReference type="PDB" id="2V7D"/>
    </source>
</evidence>
<keyword id="KW-0002">3D-structure</keyword>
<keyword id="KW-0007">Acetylation</keyword>
<keyword id="KW-0963">Cytoplasm</keyword>
<keyword id="KW-0903">Direct protein sequencing</keyword>
<keyword id="KW-0597">Phosphoprotein</keyword>
<keyword id="KW-1185">Reference proteome</keyword>
<accession>P63103</accession>
<accession>P29213</accession>
<accession>P29312</accession>
<accession>Q3ZCF9</accession>
<feature type="chain" id="PRO_0000058626" description="14-3-3 protein zeta/delta">
    <location>
        <begin position="1"/>
        <end position="245"/>
    </location>
</feature>
<feature type="site" description="Interaction with phosphoserine on interacting protein" evidence="6 8">
    <location>
        <position position="56"/>
    </location>
</feature>
<feature type="site" description="Interaction with phosphoserine on interacting protein" evidence="6 8">
    <location>
        <position position="127"/>
    </location>
</feature>
<feature type="modified residue" description="N-acetylmethionine" evidence="4">
    <location>
        <position position="1"/>
    </location>
</feature>
<feature type="modified residue" description="N6-acetyllysine" evidence="4">
    <location>
        <position position="3"/>
    </location>
</feature>
<feature type="modified residue" description="Phosphoserine; by PKA" evidence="4">
    <location>
        <position position="58"/>
    </location>
</feature>
<feature type="modified residue" description="N6-acetyllysine" evidence="4">
    <location>
        <position position="68"/>
    </location>
</feature>
<feature type="modified residue" description="Phosphoserine" evidence="4">
    <location>
        <position position="184"/>
    </location>
</feature>
<feature type="modified residue" description="Phosphoserine" evidence="4">
    <location>
        <position position="207"/>
    </location>
</feature>
<feature type="modified residue" description="Phosphoserine" evidence="3">
    <location>
        <position position="210"/>
    </location>
</feature>
<feature type="modified residue" description="Phosphothreonine; by CK1" evidence="4">
    <location>
        <position position="232"/>
    </location>
</feature>
<feature type="sequence conflict" description="In Ref. 1; AA sequence." evidence="9" ref="1">
    <original>C</original>
    <variation>A</variation>
    <location>
        <position position="25"/>
    </location>
</feature>
<feature type="helix" evidence="11">
    <location>
        <begin position="3"/>
        <end position="15"/>
    </location>
</feature>
<feature type="helix" evidence="11">
    <location>
        <begin position="19"/>
        <end position="30"/>
    </location>
</feature>
<feature type="turn" evidence="10">
    <location>
        <begin position="31"/>
        <end position="33"/>
    </location>
</feature>
<feature type="helix" evidence="11">
    <location>
        <begin position="38"/>
        <end position="67"/>
    </location>
</feature>
<feature type="helix" evidence="11">
    <location>
        <begin position="74"/>
        <end position="103"/>
    </location>
</feature>
<feature type="turn" evidence="11">
    <location>
        <begin position="104"/>
        <end position="107"/>
    </location>
</feature>
<feature type="helix" evidence="11">
    <location>
        <begin position="112"/>
        <end position="115"/>
    </location>
</feature>
<feature type="helix" evidence="11">
    <location>
        <begin position="117"/>
        <end position="131"/>
    </location>
</feature>
<feature type="helix" evidence="11">
    <location>
        <begin position="137"/>
        <end position="156"/>
    </location>
</feature>
<feature type="turn" evidence="11">
    <location>
        <begin position="157"/>
        <end position="159"/>
    </location>
</feature>
<feature type="helix" evidence="11">
    <location>
        <begin position="165"/>
        <end position="180"/>
    </location>
</feature>
<feature type="helix" evidence="11">
    <location>
        <begin position="185"/>
        <end position="201"/>
    </location>
</feature>
<feature type="turn" evidence="11">
    <location>
        <begin position="202"/>
        <end position="205"/>
    </location>
</feature>
<feature type="turn" evidence="11">
    <location>
        <begin position="208"/>
        <end position="210"/>
    </location>
</feature>
<feature type="helix" evidence="11">
    <location>
        <begin position="211"/>
        <end position="226"/>
    </location>
</feature>
<dbReference type="EMBL" id="L07955">
    <property type="protein sequence ID" value="AAA30514.1"/>
    <property type="molecule type" value="mRNA"/>
</dbReference>
<dbReference type="EMBL" id="BC102382">
    <property type="protein sequence ID" value="AAI02383.1"/>
    <property type="molecule type" value="mRNA"/>
</dbReference>
<dbReference type="PIR" id="A47389">
    <property type="entry name" value="A47389"/>
</dbReference>
<dbReference type="PIR" id="S65013">
    <property type="entry name" value="S65013"/>
</dbReference>
<dbReference type="RefSeq" id="NP_777239.1">
    <property type="nucleotide sequence ID" value="NM_174814.2"/>
</dbReference>
<dbReference type="RefSeq" id="XP_024857197.1">
    <property type="nucleotide sequence ID" value="XM_025001429.2"/>
</dbReference>
<dbReference type="RefSeq" id="XP_024857198.1">
    <property type="nucleotide sequence ID" value="XM_025001430.2"/>
</dbReference>
<dbReference type="PDB" id="1A37">
    <property type="method" value="X-ray"/>
    <property type="resolution" value="3.60 A"/>
    <property type="chains" value="A/B=1-245"/>
</dbReference>
<dbReference type="PDB" id="1A38">
    <property type="method" value="X-ray"/>
    <property type="resolution" value="3.35 A"/>
    <property type="chains" value="A/B=1-245"/>
</dbReference>
<dbReference type="PDB" id="1A4O">
    <property type="method" value="X-ray"/>
    <property type="resolution" value="2.80 A"/>
    <property type="chains" value="A/B/C/D=1-245"/>
</dbReference>
<dbReference type="PDB" id="2V7D">
    <property type="method" value="X-ray"/>
    <property type="resolution" value="2.50 A"/>
    <property type="chains" value="A/B/C/D=1-245"/>
</dbReference>
<dbReference type="PDBsum" id="1A37"/>
<dbReference type="PDBsum" id="1A38"/>
<dbReference type="PDBsum" id="1A4O"/>
<dbReference type="PDBsum" id="2V7D"/>
<dbReference type="BMRB" id="P63103"/>
<dbReference type="SMR" id="P63103"/>
<dbReference type="BioGRID" id="160005">
    <property type="interactions" value="5"/>
</dbReference>
<dbReference type="CORUM" id="P63103"/>
<dbReference type="FunCoup" id="P63103">
    <property type="interactions" value="3185"/>
</dbReference>
<dbReference type="IntAct" id="P63103">
    <property type="interactions" value="10"/>
</dbReference>
<dbReference type="MINT" id="P63103"/>
<dbReference type="STRING" id="9913.ENSBTAP00000000289"/>
<dbReference type="PaxDb" id="9913-ENSBTAP00000000289"/>
<dbReference type="PeptideAtlas" id="P63103"/>
<dbReference type="Ensembl" id="ENSBTAT00000000289.6">
    <property type="protein sequence ID" value="ENSBTAP00000000289.4"/>
    <property type="gene ID" value="ENSBTAG00000000236.6"/>
</dbReference>
<dbReference type="GeneID" id="287022"/>
<dbReference type="KEGG" id="bta:287022"/>
<dbReference type="CTD" id="7534"/>
<dbReference type="VEuPathDB" id="HostDB:ENSBTAG00000000236"/>
<dbReference type="VGNC" id="VGNC:53885">
    <property type="gene designation" value="YWHAZ"/>
</dbReference>
<dbReference type="eggNOG" id="KOG0841">
    <property type="taxonomic scope" value="Eukaryota"/>
</dbReference>
<dbReference type="GeneTree" id="ENSGT01090000260040"/>
<dbReference type="HOGENOM" id="CLU_058290_1_0_1"/>
<dbReference type="InParanoid" id="P63103"/>
<dbReference type="OMA" id="YDEMVNE"/>
<dbReference type="OrthoDB" id="10260625at2759"/>
<dbReference type="TreeFam" id="TF102003"/>
<dbReference type="Reactome" id="R-BTA-111447">
    <property type="pathway name" value="Activation of BAD and translocation to mitochondria"/>
</dbReference>
<dbReference type="Reactome" id="R-BTA-3769402">
    <property type="pathway name" value="Deactivation of the beta-catenin transactivating complex"/>
</dbReference>
<dbReference type="Reactome" id="R-BTA-392517">
    <property type="pathway name" value="Rap1 signalling"/>
</dbReference>
<dbReference type="Reactome" id="R-BTA-430116">
    <property type="pathway name" value="GP1b-IX-V activation signalling"/>
</dbReference>
<dbReference type="Reactome" id="R-BTA-450604">
    <property type="pathway name" value="KSRP (KHSRP) binds and destabilizes mRNA"/>
</dbReference>
<dbReference type="Reactome" id="R-BTA-512988">
    <property type="pathway name" value="Interleukin-3, Interleukin-5 and GM-CSF signaling"/>
</dbReference>
<dbReference type="Reactome" id="R-BTA-5625740">
    <property type="pathway name" value="RHO GTPases activate PKNs"/>
</dbReference>
<dbReference type="Reactome" id="R-BTA-5628897">
    <property type="pathway name" value="TP53 Regulates Metabolic Genes"/>
</dbReference>
<dbReference type="Reactome" id="R-BTA-75035">
    <property type="pathway name" value="Chk1/Chk2(Cds1) mediated inactivation of Cyclin B:Cdk1 complex"/>
</dbReference>
<dbReference type="Reactome" id="R-BTA-9013700">
    <property type="pathway name" value="NOTCH4 Activation and Transmission of Signal to the Nucleus"/>
</dbReference>
<dbReference type="Reactome" id="R-BTA-9614399">
    <property type="pathway name" value="Regulation of localization of FOXO transcription factors"/>
</dbReference>
<dbReference type="EvolutionaryTrace" id="P63103"/>
<dbReference type="PRO" id="PR:P63103"/>
<dbReference type="Proteomes" id="UP000009136">
    <property type="component" value="Chromosome 14"/>
</dbReference>
<dbReference type="Bgee" id="ENSBTAG00000000236">
    <property type="expression patterns" value="Expressed in occipital lobe and 108 other cell types or tissues"/>
</dbReference>
<dbReference type="GO" id="GO:0005737">
    <property type="term" value="C:cytoplasm"/>
    <property type="evidence" value="ECO:0000318"/>
    <property type="project" value="GO_Central"/>
</dbReference>
<dbReference type="GO" id="GO:0005829">
    <property type="term" value="C:cytosol"/>
    <property type="evidence" value="ECO:0007669"/>
    <property type="project" value="Ensembl"/>
</dbReference>
<dbReference type="GO" id="GO:0098978">
    <property type="term" value="C:glutamatergic synapse"/>
    <property type="evidence" value="ECO:0007669"/>
    <property type="project" value="Ensembl"/>
</dbReference>
<dbReference type="GO" id="GO:0098686">
    <property type="term" value="C:hippocampal mossy fiber to CA3 synapse"/>
    <property type="evidence" value="ECO:0007669"/>
    <property type="project" value="Ensembl"/>
</dbReference>
<dbReference type="GO" id="GO:0042470">
    <property type="term" value="C:melanosome"/>
    <property type="evidence" value="ECO:0007669"/>
    <property type="project" value="UniProtKB-SubCell"/>
</dbReference>
<dbReference type="GO" id="GO:0005634">
    <property type="term" value="C:nucleus"/>
    <property type="evidence" value="ECO:0007669"/>
    <property type="project" value="Ensembl"/>
</dbReference>
<dbReference type="GO" id="GO:0140297">
    <property type="term" value="F:DNA-binding transcription factor binding"/>
    <property type="evidence" value="ECO:0007669"/>
    <property type="project" value="Ensembl"/>
</dbReference>
<dbReference type="GO" id="GO:0042802">
    <property type="term" value="F:identical protein binding"/>
    <property type="evidence" value="ECO:0007669"/>
    <property type="project" value="Ensembl"/>
</dbReference>
<dbReference type="GO" id="GO:0050815">
    <property type="term" value="F:phosphoserine residue binding"/>
    <property type="evidence" value="ECO:0000250"/>
    <property type="project" value="UniProtKB"/>
</dbReference>
<dbReference type="GO" id="GO:0019904">
    <property type="term" value="F:protein domain specific binding"/>
    <property type="evidence" value="ECO:0007669"/>
    <property type="project" value="Ensembl"/>
</dbReference>
<dbReference type="GO" id="GO:0019901">
    <property type="term" value="F:protein kinase binding"/>
    <property type="evidence" value="ECO:0007669"/>
    <property type="project" value="Ensembl"/>
</dbReference>
<dbReference type="GO" id="GO:0019903">
    <property type="term" value="F:protein phosphatase binding"/>
    <property type="evidence" value="ECO:0007669"/>
    <property type="project" value="Ensembl"/>
</dbReference>
<dbReference type="GO" id="GO:0140311">
    <property type="term" value="F:protein sequestering activity"/>
    <property type="evidence" value="ECO:0000250"/>
    <property type="project" value="UniProtKB"/>
</dbReference>
<dbReference type="GO" id="GO:0044325">
    <property type="term" value="F:transmembrane transporter binding"/>
    <property type="evidence" value="ECO:0007669"/>
    <property type="project" value="Ensembl"/>
</dbReference>
<dbReference type="GO" id="GO:0031625">
    <property type="term" value="F:ubiquitin protein ligase binding"/>
    <property type="evidence" value="ECO:0007669"/>
    <property type="project" value="Ensembl"/>
</dbReference>
<dbReference type="GO" id="GO:0001525">
    <property type="term" value="P:angiogenesis"/>
    <property type="evidence" value="ECO:0007669"/>
    <property type="project" value="Ensembl"/>
</dbReference>
<dbReference type="GO" id="GO:0042149">
    <property type="term" value="P:cellular response to glucose starvation"/>
    <property type="evidence" value="ECO:0007669"/>
    <property type="project" value="Ensembl"/>
</dbReference>
<dbReference type="GO" id="GO:0070371">
    <property type="term" value="P:ERK1 and ERK2 cascade"/>
    <property type="evidence" value="ECO:0007669"/>
    <property type="project" value="Ensembl"/>
</dbReference>
<dbReference type="GO" id="GO:0051683">
    <property type="term" value="P:establishment of Golgi localization"/>
    <property type="evidence" value="ECO:0007669"/>
    <property type="project" value="Ensembl"/>
</dbReference>
<dbReference type="GO" id="GO:0090168">
    <property type="term" value="P:Golgi reassembly"/>
    <property type="evidence" value="ECO:0007669"/>
    <property type="project" value="Ensembl"/>
</dbReference>
<dbReference type="GO" id="GO:0030324">
    <property type="term" value="P:lung development"/>
    <property type="evidence" value="ECO:0007669"/>
    <property type="project" value="Ensembl"/>
</dbReference>
<dbReference type="GO" id="GO:0045824">
    <property type="term" value="P:negative regulation of innate immune response"/>
    <property type="evidence" value="ECO:0007669"/>
    <property type="project" value="Ensembl"/>
</dbReference>
<dbReference type="GO" id="GO:1900181">
    <property type="term" value="P:negative regulation of protein localization to nucleus"/>
    <property type="evidence" value="ECO:0007669"/>
    <property type="project" value="Ensembl"/>
</dbReference>
<dbReference type="GO" id="GO:1904262">
    <property type="term" value="P:negative regulation of TORC1 signaling"/>
    <property type="evidence" value="ECO:0007669"/>
    <property type="project" value="Ensembl"/>
</dbReference>
<dbReference type="GO" id="GO:0000122">
    <property type="term" value="P:negative regulation of transcription by RNA polymerase II"/>
    <property type="evidence" value="ECO:0007669"/>
    <property type="project" value="Ensembl"/>
</dbReference>
<dbReference type="GO" id="GO:0008104">
    <property type="term" value="P:protein localization"/>
    <property type="evidence" value="ECO:0000318"/>
    <property type="project" value="GO_Central"/>
</dbReference>
<dbReference type="GO" id="GO:0006468">
    <property type="term" value="P:protein phosphorylation"/>
    <property type="evidence" value="ECO:0000250"/>
    <property type="project" value="UniProtKB"/>
</dbReference>
<dbReference type="GO" id="GO:0006605">
    <property type="term" value="P:protein targeting"/>
    <property type="evidence" value="ECO:0007669"/>
    <property type="project" value="Ensembl"/>
</dbReference>
<dbReference type="GO" id="GO:0070372">
    <property type="term" value="P:regulation of ERK1 and ERK2 cascade"/>
    <property type="evidence" value="ECO:0000250"/>
    <property type="project" value="UniProtKB"/>
</dbReference>
<dbReference type="GO" id="GO:0043067">
    <property type="term" value="P:regulation of programmed cell death"/>
    <property type="evidence" value="ECO:0007669"/>
    <property type="project" value="Ensembl"/>
</dbReference>
<dbReference type="GO" id="GO:0090128">
    <property type="term" value="P:regulation of synapse maturation"/>
    <property type="evidence" value="ECO:0007669"/>
    <property type="project" value="Ensembl"/>
</dbReference>
<dbReference type="GO" id="GO:0003016">
    <property type="term" value="P:respiratory system process"/>
    <property type="evidence" value="ECO:0007669"/>
    <property type="project" value="Ensembl"/>
</dbReference>
<dbReference type="GO" id="GO:0007165">
    <property type="term" value="P:signal transduction"/>
    <property type="evidence" value="ECO:0000250"/>
    <property type="project" value="UniProtKB"/>
</dbReference>
<dbReference type="GO" id="GO:0008039">
    <property type="term" value="P:synaptic target recognition"/>
    <property type="evidence" value="ECO:0007669"/>
    <property type="project" value="Ensembl"/>
</dbReference>
<dbReference type="GO" id="GO:0035148">
    <property type="term" value="P:tube formation"/>
    <property type="evidence" value="ECO:0007669"/>
    <property type="project" value="Ensembl"/>
</dbReference>
<dbReference type="CDD" id="cd10022">
    <property type="entry name" value="14-3-3_beta_zeta"/>
    <property type="match status" value="1"/>
</dbReference>
<dbReference type="FunFam" id="1.20.190.20:FF:000001">
    <property type="entry name" value="14-3-3 gamma 1"/>
    <property type="match status" value="1"/>
</dbReference>
<dbReference type="Gene3D" id="1.20.190.20">
    <property type="entry name" value="14-3-3 domain"/>
    <property type="match status" value="1"/>
</dbReference>
<dbReference type="InterPro" id="IPR000308">
    <property type="entry name" value="14-3-3"/>
</dbReference>
<dbReference type="InterPro" id="IPR023409">
    <property type="entry name" value="14-3-3_CS"/>
</dbReference>
<dbReference type="InterPro" id="IPR036815">
    <property type="entry name" value="14-3-3_dom_sf"/>
</dbReference>
<dbReference type="InterPro" id="IPR023410">
    <property type="entry name" value="14-3-3_domain"/>
</dbReference>
<dbReference type="PANTHER" id="PTHR18860">
    <property type="entry name" value="14-3-3 PROTEIN"/>
    <property type="match status" value="1"/>
</dbReference>
<dbReference type="Pfam" id="PF00244">
    <property type="entry name" value="14-3-3"/>
    <property type="match status" value="1"/>
</dbReference>
<dbReference type="PIRSF" id="PIRSF000868">
    <property type="entry name" value="14-3-3"/>
    <property type="match status" value="1"/>
</dbReference>
<dbReference type="PRINTS" id="PR00305">
    <property type="entry name" value="1433ZETA"/>
</dbReference>
<dbReference type="SMART" id="SM00101">
    <property type="entry name" value="14_3_3"/>
    <property type="match status" value="1"/>
</dbReference>
<dbReference type="SUPFAM" id="SSF48445">
    <property type="entry name" value="14-3-3 protein"/>
    <property type="match status" value="1"/>
</dbReference>
<dbReference type="PROSITE" id="PS00796">
    <property type="entry name" value="1433_1"/>
    <property type="match status" value="1"/>
</dbReference>
<dbReference type="PROSITE" id="PS00797">
    <property type="entry name" value="1433_2"/>
    <property type="match status" value="1"/>
</dbReference>